<gene>
    <name evidence="1" type="primary">rnhB</name>
    <name type="ordered locus">gbs1047</name>
</gene>
<keyword id="KW-0963">Cytoplasm</keyword>
<keyword id="KW-0255">Endonuclease</keyword>
<keyword id="KW-0378">Hydrolase</keyword>
<keyword id="KW-0464">Manganese</keyword>
<keyword id="KW-0479">Metal-binding</keyword>
<keyword id="KW-0540">Nuclease</keyword>
<dbReference type="EC" id="3.1.26.4" evidence="1"/>
<dbReference type="EMBL" id="AL766848">
    <property type="protein sequence ID" value="CAD46706.1"/>
    <property type="molecule type" value="Genomic_DNA"/>
</dbReference>
<dbReference type="RefSeq" id="WP_000201088.1">
    <property type="nucleotide sequence ID" value="NC_004368.1"/>
</dbReference>
<dbReference type="SMR" id="Q8E5I2"/>
<dbReference type="KEGG" id="san:gbs1047"/>
<dbReference type="eggNOG" id="COG0164">
    <property type="taxonomic scope" value="Bacteria"/>
</dbReference>
<dbReference type="HOGENOM" id="CLU_036532_2_1_9"/>
<dbReference type="Proteomes" id="UP000000823">
    <property type="component" value="Chromosome"/>
</dbReference>
<dbReference type="GO" id="GO:0005737">
    <property type="term" value="C:cytoplasm"/>
    <property type="evidence" value="ECO:0007669"/>
    <property type="project" value="UniProtKB-SubCell"/>
</dbReference>
<dbReference type="GO" id="GO:0032299">
    <property type="term" value="C:ribonuclease H2 complex"/>
    <property type="evidence" value="ECO:0007669"/>
    <property type="project" value="TreeGrafter"/>
</dbReference>
<dbReference type="GO" id="GO:0030145">
    <property type="term" value="F:manganese ion binding"/>
    <property type="evidence" value="ECO:0007669"/>
    <property type="project" value="UniProtKB-UniRule"/>
</dbReference>
<dbReference type="GO" id="GO:0003723">
    <property type="term" value="F:RNA binding"/>
    <property type="evidence" value="ECO:0007669"/>
    <property type="project" value="InterPro"/>
</dbReference>
<dbReference type="GO" id="GO:0004523">
    <property type="term" value="F:RNA-DNA hybrid ribonuclease activity"/>
    <property type="evidence" value="ECO:0007669"/>
    <property type="project" value="UniProtKB-UniRule"/>
</dbReference>
<dbReference type="GO" id="GO:0043137">
    <property type="term" value="P:DNA replication, removal of RNA primer"/>
    <property type="evidence" value="ECO:0007669"/>
    <property type="project" value="TreeGrafter"/>
</dbReference>
<dbReference type="GO" id="GO:0006298">
    <property type="term" value="P:mismatch repair"/>
    <property type="evidence" value="ECO:0007669"/>
    <property type="project" value="TreeGrafter"/>
</dbReference>
<dbReference type="CDD" id="cd07182">
    <property type="entry name" value="RNase_HII_bacteria_HII_like"/>
    <property type="match status" value="1"/>
</dbReference>
<dbReference type="FunFam" id="3.30.420.10:FF:000006">
    <property type="entry name" value="Ribonuclease HII"/>
    <property type="match status" value="1"/>
</dbReference>
<dbReference type="Gene3D" id="3.30.420.10">
    <property type="entry name" value="Ribonuclease H-like superfamily/Ribonuclease H"/>
    <property type="match status" value="1"/>
</dbReference>
<dbReference type="HAMAP" id="MF_00052_B">
    <property type="entry name" value="RNase_HII_B"/>
    <property type="match status" value="1"/>
</dbReference>
<dbReference type="InterPro" id="IPR022898">
    <property type="entry name" value="RNase_HII"/>
</dbReference>
<dbReference type="InterPro" id="IPR001352">
    <property type="entry name" value="RNase_HII/HIII"/>
</dbReference>
<dbReference type="InterPro" id="IPR024567">
    <property type="entry name" value="RNase_HII/HIII_dom"/>
</dbReference>
<dbReference type="InterPro" id="IPR012337">
    <property type="entry name" value="RNaseH-like_sf"/>
</dbReference>
<dbReference type="InterPro" id="IPR036397">
    <property type="entry name" value="RNaseH_sf"/>
</dbReference>
<dbReference type="NCBIfam" id="NF000594">
    <property type="entry name" value="PRK00015.1-1"/>
    <property type="match status" value="1"/>
</dbReference>
<dbReference type="NCBIfam" id="NF000595">
    <property type="entry name" value="PRK00015.1-3"/>
    <property type="match status" value="1"/>
</dbReference>
<dbReference type="PANTHER" id="PTHR10954">
    <property type="entry name" value="RIBONUCLEASE H2 SUBUNIT A"/>
    <property type="match status" value="1"/>
</dbReference>
<dbReference type="PANTHER" id="PTHR10954:SF18">
    <property type="entry name" value="RIBONUCLEASE HII"/>
    <property type="match status" value="1"/>
</dbReference>
<dbReference type="Pfam" id="PF01351">
    <property type="entry name" value="RNase_HII"/>
    <property type="match status" value="1"/>
</dbReference>
<dbReference type="SUPFAM" id="SSF53098">
    <property type="entry name" value="Ribonuclease H-like"/>
    <property type="match status" value="1"/>
</dbReference>
<dbReference type="PROSITE" id="PS51975">
    <property type="entry name" value="RNASE_H_2"/>
    <property type="match status" value="1"/>
</dbReference>
<organism>
    <name type="scientific">Streptococcus agalactiae serotype III (strain NEM316)</name>
    <dbReference type="NCBI Taxonomy" id="211110"/>
    <lineage>
        <taxon>Bacteria</taxon>
        <taxon>Bacillati</taxon>
        <taxon>Bacillota</taxon>
        <taxon>Bacilli</taxon>
        <taxon>Lactobacillales</taxon>
        <taxon>Streptococcaceae</taxon>
        <taxon>Streptococcus</taxon>
    </lineage>
</organism>
<feature type="chain" id="PRO_0000111629" description="Ribonuclease HII">
    <location>
        <begin position="1"/>
        <end position="253"/>
    </location>
</feature>
<feature type="domain" description="RNase H type-2" evidence="2">
    <location>
        <begin position="70"/>
        <end position="253"/>
    </location>
</feature>
<feature type="binding site" evidence="1">
    <location>
        <position position="76"/>
    </location>
    <ligand>
        <name>a divalent metal cation</name>
        <dbReference type="ChEBI" id="CHEBI:60240"/>
    </ligand>
</feature>
<feature type="binding site" evidence="1">
    <location>
        <position position="77"/>
    </location>
    <ligand>
        <name>a divalent metal cation</name>
        <dbReference type="ChEBI" id="CHEBI:60240"/>
    </ligand>
</feature>
<feature type="binding site" evidence="1">
    <location>
        <position position="168"/>
    </location>
    <ligand>
        <name>a divalent metal cation</name>
        <dbReference type="ChEBI" id="CHEBI:60240"/>
    </ligand>
</feature>
<comment type="function">
    <text evidence="1">Endonuclease that specifically degrades the RNA of RNA-DNA hybrids.</text>
</comment>
<comment type="catalytic activity">
    <reaction evidence="1">
        <text>Endonucleolytic cleavage to 5'-phosphomonoester.</text>
        <dbReference type="EC" id="3.1.26.4"/>
    </reaction>
</comment>
<comment type="cofactor">
    <cofactor evidence="1">
        <name>Mn(2+)</name>
        <dbReference type="ChEBI" id="CHEBI:29035"/>
    </cofactor>
    <cofactor evidence="1">
        <name>Mg(2+)</name>
        <dbReference type="ChEBI" id="CHEBI:18420"/>
    </cofactor>
    <text evidence="1">Manganese or magnesium. Binds 1 divalent metal ion per monomer in the absence of substrate. May bind a second metal ion after substrate binding.</text>
</comment>
<comment type="subcellular location">
    <subcellularLocation>
        <location evidence="1">Cytoplasm</location>
    </subcellularLocation>
</comment>
<comment type="similarity">
    <text evidence="1">Belongs to the RNase HII family.</text>
</comment>
<name>RNH2_STRA3</name>
<protein>
    <recommendedName>
        <fullName evidence="1">Ribonuclease HII</fullName>
        <shortName evidence="1">RNase HII</shortName>
        <ecNumber evidence="1">3.1.26.4</ecNumber>
    </recommendedName>
</protein>
<accession>Q8E5I2</accession>
<proteinExistence type="inferred from homology"/>
<sequence length="253" mass="28155">MATIKEIKAILETIVDLKDKRWQEYQTDSRAGVQKAILQRKKNIQSDLDEEARLEQMLVYEKKLYIEHINLIAGIDEVGRGPLAGPVVAAAVILPPNCKIKHLNDSKKIPKKKHQEIYQNILDQALAVGIGIQDSQCIDDINIYEATKHAMIDAVSHLSVAPEHLLIDAMVLDLSIPQTKIIKGDANSLSIAAASIVAKVTRDKIMSDYDSTYPGYAFSKNAGYGTKEHLEGLQKYGITPIHRKSFEPIKSML</sequence>
<reference key="1">
    <citation type="journal article" date="2002" name="Mol. Microbiol.">
        <title>Genome sequence of Streptococcus agalactiae, a pathogen causing invasive neonatal disease.</title>
        <authorList>
            <person name="Glaser P."/>
            <person name="Rusniok C."/>
            <person name="Buchrieser C."/>
            <person name="Chevalier F."/>
            <person name="Frangeul L."/>
            <person name="Msadek T."/>
            <person name="Zouine M."/>
            <person name="Couve E."/>
            <person name="Lalioui L."/>
            <person name="Poyart C."/>
            <person name="Trieu-Cuot P."/>
            <person name="Kunst F."/>
        </authorList>
    </citation>
    <scope>NUCLEOTIDE SEQUENCE [LARGE SCALE GENOMIC DNA]</scope>
    <source>
        <strain>NEM316</strain>
    </source>
</reference>
<evidence type="ECO:0000255" key="1">
    <source>
        <dbReference type="HAMAP-Rule" id="MF_00052"/>
    </source>
</evidence>
<evidence type="ECO:0000255" key="2">
    <source>
        <dbReference type="PROSITE-ProRule" id="PRU01319"/>
    </source>
</evidence>